<reference key="1">
    <citation type="journal article" date="2007" name="Genome Biol.">
        <title>Characterization and modeling of the Haemophilus influenzae core and supragenomes based on the complete genomic sequences of Rd and 12 clinical nontypeable strains.</title>
        <authorList>
            <person name="Hogg J.S."/>
            <person name="Hu F.Z."/>
            <person name="Janto B."/>
            <person name="Boissy R."/>
            <person name="Hayes J."/>
            <person name="Keefe R."/>
            <person name="Post J.C."/>
            <person name="Ehrlich G.D."/>
        </authorList>
    </citation>
    <scope>NUCLEOTIDE SEQUENCE [LARGE SCALE GENOMIC DNA]</scope>
    <source>
        <strain>PittGG</strain>
    </source>
</reference>
<evidence type="ECO:0000255" key="1">
    <source>
        <dbReference type="HAMAP-Rule" id="MF_00141"/>
    </source>
</evidence>
<organism>
    <name type="scientific">Haemophilus influenzae (strain PittGG)</name>
    <dbReference type="NCBI Taxonomy" id="374931"/>
    <lineage>
        <taxon>Bacteria</taxon>
        <taxon>Pseudomonadati</taxon>
        <taxon>Pseudomonadota</taxon>
        <taxon>Gammaproteobacteria</taxon>
        <taxon>Pasteurellales</taxon>
        <taxon>Pasteurellaceae</taxon>
        <taxon>Haemophilus</taxon>
    </lineage>
</organism>
<comment type="function">
    <text evidence="1">Involved in peptide bond synthesis. Alleviates ribosome stalling that occurs when 3 or more consecutive Pro residues or the sequence PPG is present in a protein, possibly by augmenting the peptidyl transferase activity of the ribosome. Modification of Lys-34 is required for alleviation.</text>
</comment>
<comment type="pathway">
    <text evidence="1">Protein biosynthesis; polypeptide chain elongation.</text>
</comment>
<comment type="subcellular location">
    <subcellularLocation>
        <location evidence="1">Cytoplasm</location>
    </subcellularLocation>
</comment>
<comment type="PTM">
    <text evidence="1">May be beta-lysylated on the epsilon-amino group of Lys-34 by the combined action of EpmA and EpmB, and then hydroxylated on the C5 position of the same residue by EpmC (if this protein is present). Lysylation is critical for the stimulatory effect of EF-P on peptide-bond formation. The lysylation moiety may extend toward the peptidyltransferase center and stabilize the terminal 3-CCA end of the tRNA. Hydroxylation of the C5 position on Lys-34 may allow additional potential stabilizing hydrogen-bond interactions with the P-tRNA.</text>
</comment>
<comment type="similarity">
    <text evidence="1">Belongs to the elongation factor P family.</text>
</comment>
<protein>
    <recommendedName>
        <fullName evidence="1">Elongation factor P</fullName>
        <shortName evidence="1">EF-P</shortName>
    </recommendedName>
</protein>
<feature type="chain" id="PRO_1000010756" description="Elongation factor P">
    <location>
        <begin position="1"/>
        <end position="188"/>
    </location>
</feature>
<feature type="modified residue" description="N6-(3,6-diaminohexanoyl)-5-hydroxylysine" evidence="1">
    <location>
        <position position="34"/>
    </location>
</feature>
<sequence>MATYTTSDFKPGLKFMQDGEPCVIVENEFVKPGKGQAFTRTRIRKLISGKVLDVNFKSGTSVEAADVMDLNLTYSYKDDAFWYFMHPETFEQYSADAKAVGDAEKWLLDQADCVVTLWNGAPITVTPPNFVELEIVDTDPGLKGDTAGTGGKPATLSTGAVVKVPLFVQIGEVIRVDTRSGEYVSRVK</sequence>
<name>EFP_HAEIG</name>
<keyword id="KW-0963">Cytoplasm</keyword>
<keyword id="KW-0251">Elongation factor</keyword>
<keyword id="KW-0379">Hydroxylation</keyword>
<keyword id="KW-0648">Protein biosynthesis</keyword>
<proteinExistence type="inferred from homology"/>
<gene>
    <name evidence="1" type="primary">efp</name>
    <name type="ordered locus">CGSHiGG_04435</name>
</gene>
<dbReference type="EMBL" id="CP000672">
    <property type="protein sequence ID" value="ABQ99845.1"/>
    <property type="molecule type" value="Genomic_DNA"/>
</dbReference>
<dbReference type="SMR" id="A5UGE0"/>
<dbReference type="KEGG" id="hiq:CGSHiGG_04435"/>
<dbReference type="HOGENOM" id="CLU_074944_0_0_6"/>
<dbReference type="UniPathway" id="UPA00345"/>
<dbReference type="Proteomes" id="UP000001990">
    <property type="component" value="Chromosome"/>
</dbReference>
<dbReference type="GO" id="GO:0005737">
    <property type="term" value="C:cytoplasm"/>
    <property type="evidence" value="ECO:0007669"/>
    <property type="project" value="UniProtKB-SubCell"/>
</dbReference>
<dbReference type="GO" id="GO:0003746">
    <property type="term" value="F:translation elongation factor activity"/>
    <property type="evidence" value="ECO:0007669"/>
    <property type="project" value="UniProtKB-UniRule"/>
</dbReference>
<dbReference type="GO" id="GO:0043043">
    <property type="term" value="P:peptide biosynthetic process"/>
    <property type="evidence" value="ECO:0007669"/>
    <property type="project" value="InterPro"/>
</dbReference>
<dbReference type="CDD" id="cd04470">
    <property type="entry name" value="S1_EF-P_repeat_1"/>
    <property type="match status" value="1"/>
</dbReference>
<dbReference type="CDD" id="cd05794">
    <property type="entry name" value="S1_EF-P_repeat_2"/>
    <property type="match status" value="1"/>
</dbReference>
<dbReference type="FunFam" id="2.30.30.30:FF:000003">
    <property type="entry name" value="Elongation factor P"/>
    <property type="match status" value="1"/>
</dbReference>
<dbReference type="FunFam" id="2.40.50.140:FF:000004">
    <property type="entry name" value="Elongation factor P"/>
    <property type="match status" value="1"/>
</dbReference>
<dbReference type="FunFam" id="2.40.50.140:FF:000009">
    <property type="entry name" value="Elongation factor P"/>
    <property type="match status" value="1"/>
</dbReference>
<dbReference type="Gene3D" id="2.30.30.30">
    <property type="match status" value="1"/>
</dbReference>
<dbReference type="Gene3D" id="2.40.50.140">
    <property type="entry name" value="Nucleic acid-binding proteins"/>
    <property type="match status" value="2"/>
</dbReference>
<dbReference type="HAMAP" id="MF_00141">
    <property type="entry name" value="EF_P"/>
    <property type="match status" value="1"/>
</dbReference>
<dbReference type="InterPro" id="IPR015365">
    <property type="entry name" value="Elong-fact-P_C"/>
</dbReference>
<dbReference type="InterPro" id="IPR012340">
    <property type="entry name" value="NA-bd_OB-fold"/>
</dbReference>
<dbReference type="InterPro" id="IPR014722">
    <property type="entry name" value="Rib_uL2_dom2"/>
</dbReference>
<dbReference type="InterPro" id="IPR020599">
    <property type="entry name" value="Transl_elong_fac_P/YeiP"/>
</dbReference>
<dbReference type="InterPro" id="IPR013185">
    <property type="entry name" value="Transl_elong_KOW-like"/>
</dbReference>
<dbReference type="InterPro" id="IPR001059">
    <property type="entry name" value="Transl_elong_P/YeiP_cen"/>
</dbReference>
<dbReference type="InterPro" id="IPR013852">
    <property type="entry name" value="Transl_elong_P/YeiP_CS"/>
</dbReference>
<dbReference type="InterPro" id="IPR011768">
    <property type="entry name" value="Transl_elongation_fac_P"/>
</dbReference>
<dbReference type="InterPro" id="IPR008991">
    <property type="entry name" value="Translation_prot_SH3-like_sf"/>
</dbReference>
<dbReference type="NCBIfam" id="TIGR00038">
    <property type="entry name" value="efp"/>
    <property type="match status" value="1"/>
</dbReference>
<dbReference type="NCBIfam" id="NF001810">
    <property type="entry name" value="PRK00529.1"/>
    <property type="match status" value="1"/>
</dbReference>
<dbReference type="PANTHER" id="PTHR30053">
    <property type="entry name" value="ELONGATION FACTOR P"/>
    <property type="match status" value="1"/>
</dbReference>
<dbReference type="PANTHER" id="PTHR30053:SF12">
    <property type="entry name" value="ELONGATION FACTOR P (EF-P) FAMILY PROTEIN"/>
    <property type="match status" value="1"/>
</dbReference>
<dbReference type="Pfam" id="PF01132">
    <property type="entry name" value="EFP"/>
    <property type="match status" value="1"/>
</dbReference>
<dbReference type="Pfam" id="PF08207">
    <property type="entry name" value="EFP_N"/>
    <property type="match status" value="1"/>
</dbReference>
<dbReference type="Pfam" id="PF09285">
    <property type="entry name" value="Elong-fact-P_C"/>
    <property type="match status" value="1"/>
</dbReference>
<dbReference type="PIRSF" id="PIRSF005901">
    <property type="entry name" value="EF-P"/>
    <property type="match status" value="1"/>
</dbReference>
<dbReference type="SMART" id="SM01185">
    <property type="entry name" value="EFP"/>
    <property type="match status" value="1"/>
</dbReference>
<dbReference type="SMART" id="SM00841">
    <property type="entry name" value="Elong-fact-P_C"/>
    <property type="match status" value="1"/>
</dbReference>
<dbReference type="SUPFAM" id="SSF50249">
    <property type="entry name" value="Nucleic acid-binding proteins"/>
    <property type="match status" value="2"/>
</dbReference>
<dbReference type="SUPFAM" id="SSF50104">
    <property type="entry name" value="Translation proteins SH3-like domain"/>
    <property type="match status" value="1"/>
</dbReference>
<dbReference type="PROSITE" id="PS01275">
    <property type="entry name" value="EFP"/>
    <property type="match status" value="1"/>
</dbReference>
<accession>A5UGE0</accession>